<sequence>MSVTMREMLEAGCHFGHQTRFWNPKMAPFIFGHRNKIHIINLEKTLPMFQDAMKYVRQLAANRGTILFVGTKRQSREILAEEAGRAGMPYVDARWLGGMLTNFKTVKTSIKRLKDMEAAKEAGALETMSKKEALMFEREMIKLEKSIGGIKEMGGVPDAIFVVDVGYHKIAVTEANKLGIPVIGVVDTNHSPEGIDYVIPGNDDSSKAVALYVRGVADAILEGRANAVQEVVEAARGDDEFVEVQEG</sequence>
<dbReference type="EMBL" id="CU633749">
    <property type="protein sequence ID" value="CAQ69634.1"/>
    <property type="molecule type" value="Genomic_DNA"/>
</dbReference>
<dbReference type="RefSeq" id="WP_012352954.1">
    <property type="nucleotide sequence ID" value="NC_010528.1"/>
</dbReference>
<dbReference type="SMR" id="B3R2B7"/>
<dbReference type="GeneID" id="29763140"/>
<dbReference type="KEGG" id="cti:RALTA_A1691"/>
<dbReference type="eggNOG" id="COG0052">
    <property type="taxonomic scope" value="Bacteria"/>
</dbReference>
<dbReference type="HOGENOM" id="CLU_040318_1_2_4"/>
<dbReference type="BioCyc" id="CTAI977880:RALTA_RS08130-MONOMER"/>
<dbReference type="Proteomes" id="UP000001692">
    <property type="component" value="Chromosome 1"/>
</dbReference>
<dbReference type="GO" id="GO:0022627">
    <property type="term" value="C:cytosolic small ribosomal subunit"/>
    <property type="evidence" value="ECO:0007669"/>
    <property type="project" value="TreeGrafter"/>
</dbReference>
<dbReference type="GO" id="GO:0003735">
    <property type="term" value="F:structural constituent of ribosome"/>
    <property type="evidence" value="ECO:0007669"/>
    <property type="project" value="InterPro"/>
</dbReference>
<dbReference type="GO" id="GO:0006412">
    <property type="term" value="P:translation"/>
    <property type="evidence" value="ECO:0007669"/>
    <property type="project" value="UniProtKB-UniRule"/>
</dbReference>
<dbReference type="CDD" id="cd01425">
    <property type="entry name" value="RPS2"/>
    <property type="match status" value="1"/>
</dbReference>
<dbReference type="FunFam" id="1.10.287.610:FF:000001">
    <property type="entry name" value="30S ribosomal protein S2"/>
    <property type="match status" value="1"/>
</dbReference>
<dbReference type="Gene3D" id="3.40.50.10490">
    <property type="entry name" value="Glucose-6-phosphate isomerase like protein, domain 1"/>
    <property type="match status" value="1"/>
</dbReference>
<dbReference type="Gene3D" id="1.10.287.610">
    <property type="entry name" value="Helix hairpin bin"/>
    <property type="match status" value="1"/>
</dbReference>
<dbReference type="HAMAP" id="MF_00291_B">
    <property type="entry name" value="Ribosomal_uS2_B"/>
    <property type="match status" value="1"/>
</dbReference>
<dbReference type="InterPro" id="IPR001865">
    <property type="entry name" value="Ribosomal_uS2"/>
</dbReference>
<dbReference type="InterPro" id="IPR005706">
    <property type="entry name" value="Ribosomal_uS2_bac/mit/plastid"/>
</dbReference>
<dbReference type="InterPro" id="IPR023591">
    <property type="entry name" value="Ribosomal_uS2_flav_dom_sf"/>
</dbReference>
<dbReference type="NCBIfam" id="TIGR01011">
    <property type="entry name" value="rpsB_bact"/>
    <property type="match status" value="1"/>
</dbReference>
<dbReference type="PANTHER" id="PTHR12534">
    <property type="entry name" value="30S RIBOSOMAL PROTEIN S2 PROKARYOTIC AND ORGANELLAR"/>
    <property type="match status" value="1"/>
</dbReference>
<dbReference type="PANTHER" id="PTHR12534:SF0">
    <property type="entry name" value="SMALL RIBOSOMAL SUBUNIT PROTEIN US2M"/>
    <property type="match status" value="1"/>
</dbReference>
<dbReference type="Pfam" id="PF00318">
    <property type="entry name" value="Ribosomal_S2"/>
    <property type="match status" value="1"/>
</dbReference>
<dbReference type="PRINTS" id="PR00395">
    <property type="entry name" value="RIBOSOMALS2"/>
</dbReference>
<dbReference type="SUPFAM" id="SSF52313">
    <property type="entry name" value="Ribosomal protein S2"/>
    <property type="match status" value="1"/>
</dbReference>
<keyword id="KW-0687">Ribonucleoprotein</keyword>
<keyword id="KW-0689">Ribosomal protein</keyword>
<comment type="similarity">
    <text evidence="1">Belongs to the universal ribosomal protein uS2 family.</text>
</comment>
<organism>
    <name type="scientific">Cupriavidus taiwanensis (strain DSM 17343 / BCRC 17206 / CCUG 44338 / CIP 107171 / LMG 19424 / R1)</name>
    <name type="common">Ralstonia taiwanensis (strain LMG 19424)</name>
    <dbReference type="NCBI Taxonomy" id="977880"/>
    <lineage>
        <taxon>Bacteria</taxon>
        <taxon>Pseudomonadati</taxon>
        <taxon>Pseudomonadota</taxon>
        <taxon>Betaproteobacteria</taxon>
        <taxon>Burkholderiales</taxon>
        <taxon>Burkholderiaceae</taxon>
        <taxon>Cupriavidus</taxon>
    </lineage>
</organism>
<accession>B3R2B7</accession>
<proteinExistence type="inferred from homology"/>
<reference key="1">
    <citation type="journal article" date="2008" name="Genome Res.">
        <title>Genome sequence of the beta-rhizobium Cupriavidus taiwanensis and comparative genomics of rhizobia.</title>
        <authorList>
            <person name="Amadou C."/>
            <person name="Pascal G."/>
            <person name="Mangenot S."/>
            <person name="Glew M."/>
            <person name="Bontemps C."/>
            <person name="Capela D."/>
            <person name="Carrere S."/>
            <person name="Cruveiller S."/>
            <person name="Dossat C."/>
            <person name="Lajus A."/>
            <person name="Marchetti M."/>
            <person name="Poinsot V."/>
            <person name="Rouy Z."/>
            <person name="Servin B."/>
            <person name="Saad M."/>
            <person name="Schenowitz C."/>
            <person name="Barbe V."/>
            <person name="Batut J."/>
            <person name="Medigue C."/>
            <person name="Masson-Boivin C."/>
        </authorList>
    </citation>
    <scope>NUCLEOTIDE SEQUENCE [LARGE SCALE GENOMIC DNA]</scope>
    <source>
        <strain>DSM 17343 / BCRC 17206 / CCUG 44338 / CIP 107171 / LMG 19424 / R1</strain>
    </source>
</reference>
<protein>
    <recommendedName>
        <fullName evidence="1">Small ribosomal subunit protein uS2</fullName>
    </recommendedName>
    <alternativeName>
        <fullName evidence="2">30S ribosomal protein S2</fullName>
    </alternativeName>
</protein>
<gene>
    <name evidence="1" type="primary">rpsB</name>
    <name type="ordered locus">RALTA_A1691</name>
</gene>
<name>RS2_CUPTR</name>
<feature type="chain" id="PRO_1000115011" description="Small ribosomal subunit protein uS2">
    <location>
        <begin position="1"/>
        <end position="247"/>
    </location>
</feature>
<evidence type="ECO:0000255" key="1">
    <source>
        <dbReference type="HAMAP-Rule" id="MF_00291"/>
    </source>
</evidence>
<evidence type="ECO:0000305" key="2"/>